<keyword id="KW-0479">Metal-binding</keyword>
<keyword id="KW-0665">Pyrimidine biosynthesis</keyword>
<keyword id="KW-0862">Zinc</keyword>
<gene>
    <name evidence="1" type="primary">pyrI</name>
    <name type="ordered locus">MmarC7_0356</name>
</gene>
<dbReference type="EMBL" id="CP000745">
    <property type="protein sequence ID" value="ABR65425.1"/>
    <property type="molecule type" value="Genomic_DNA"/>
</dbReference>
<dbReference type="SMR" id="A6VG49"/>
<dbReference type="STRING" id="426368.MmarC7_0356"/>
<dbReference type="KEGG" id="mmz:MmarC7_0356"/>
<dbReference type="eggNOG" id="arCOG04229">
    <property type="taxonomic scope" value="Archaea"/>
</dbReference>
<dbReference type="HOGENOM" id="CLU_128576_0_0_2"/>
<dbReference type="OrthoDB" id="7000at2157"/>
<dbReference type="GO" id="GO:0009347">
    <property type="term" value="C:aspartate carbamoyltransferase complex"/>
    <property type="evidence" value="ECO:0007669"/>
    <property type="project" value="InterPro"/>
</dbReference>
<dbReference type="GO" id="GO:0046872">
    <property type="term" value="F:metal ion binding"/>
    <property type="evidence" value="ECO:0007669"/>
    <property type="project" value="UniProtKB-KW"/>
</dbReference>
<dbReference type="GO" id="GO:0006207">
    <property type="term" value="P:'de novo' pyrimidine nucleobase biosynthetic process"/>
    <property type="evidence" value="ECO:0007669"/>
    <property type="project" value="InterPro"/>
</dbReference>
<dbReference type="GO" id="GO:0006221">
    <property type="term" value="P:pyrimidine nucleotide biosynthetic process"/>
    <property type="evidence" value="ECO:0007669"/>
    <property type="project" value="UniProtKB-UniRule"/>
</dbReference>
<dbReference type="Gene3D" id="2.30.30.20">
    <property type="entry name" value="Aspartate carbamoyltransferase regulatory subunit, C-terminal domain"/>
    <property type="match status" value="1"/>
</dbReference>
<dbReference type="Gene3D" id="3.30.70.140">
    <property type="entry name" value="Aspartate carbamoyltransferase regulatory subunit, N-terminal domain"/>
    <property type="match status" value="1"/>
</dbReference>
<dbReference type="HAMAP" id="MF_00002">
    <property type="entry name" value="Asp_carb_tr_reg"/>
    <property type="match status" value="1"/>
</dbReference>
<dbReference type="InterPro" id="IPR020545">
    <property type="entry name" value="Asp_carbamoyltransf_reg_N"/>
</dbReference>
<dbReference type="InterPro" id="IPR002801">
    <property type="entry name" value="Asp_carbamoylTrfase_reg"/>
</dbReference>
<dbReference type="InterPro" id="IPR020542">
    <property type="entry name" value="Asp_carbamoyltrfase_reg_C"/>
</dbReference>
<dbReference type="InterPro" id="IPR036792">
    <property type="entry name" value="Asp_carbatrfase_reg_C_sf"/>
</dbReference>
<dbReference type="InterPro" id="IPR036793">
    <property type="entry name" value="Asp_carbatrfase_reg_N_sf"/>
</dbReference>
<dbReference type="NCBIfam" id="TIGR00240">
    <property type="entry name" value="ATCase_reg"/>
    <property type="match status" value="1"/>
</dbReference>
<dbReference type="PANTHER" id="PTHR35805">
    <property type="entry name" value="ASPARTATE CARBAMOYLTRANSFERASE REGULATORY CHAIN"/>
    <property type="match status" value="1"/>
</dbReference>
<dbReference type="PANTHER" id="PTHR35805:SF1">
    <property type="entry name" value="ASPARTATE CARBAMOYLTRANSFERASE REGULATORY CHAIN"/>
    <property type="match status" value="1"/>
</dbReference>
<dbReference type="Pfam" id="PF01948">
    <property type="entry name" value="PyrI"/>
    <property type="match status" value="1"/>
</dbReference>
<dbReference type="Pfam" id="PF02748">
    <property type="entry name" value="PyrI_C"/>
    <property type="match status" value="1"/>
</dbReference>
<dbReference type="SUPFAM" id="SSF57825">
    <property type="entry name" value="Aspartate carbamoyltransferase, Regulatory-chain, C-terminal domain"/>
    <property type="match status" value="1"/>
</dbReference>
<dbReference type="SUPFAM" id="SSF54893">
    <property type="entry name" value="Aspartate carbamoyltransferase, Regulatory-chain, N-terminal domain"/>
    <property type="match status" value="1"/>
</dbReference>
<sequence length="148" mass="16679">MKMELKVKPIENGTVIDHISGSKALKVYKILNIEEKLPMTIALNVPSKKGVMKDILKIEGLELTKEDVNKIALISPDATINIIKEGIVIKKFKVDLPKRIDGIIKCTNPNCITNKENIDGKFSIEQKNTLKIRCEYCEKFINSIIISK</sequence>
<reference key="1">
    <citation type="submission" date="2007-06" db="EMBL/GenBank/DDBJ databases">
        <title>Complete sequence of Methanococcus maripaludis C7.</title>
        <authorList>
            <consortium name="US DOE Joint Genome Institute"/>
            <person name="Copeland A."/>
            <person name="Lucas S."/>
            <person name="Lapidus A."/>
            <person name="Barry K."/>
            <person name="Glavina del Rio T."/>
            <person name="Dalin E."/>
            <person name="Tice H."/>
            <person name="Pitluck S."/>
            <person name="Clum A."/>
            <person name="Schmutz J."/>
            <person name="Larimer F."/>
            <person name="Land M."/>
            <person name="Hauser L."/>
            <person name="Kyrpides N."/>
            <person name="Anderson I."/>
            <person name="Sieprawska-Lupa M."/>
            <person name="Whitman W.B."/>
            <person name="Richardson P."/>
        </authorList>
    </citation>
    <scope>NUCLEOTIDE SEQUENCE [LARGE SCALE GENOMIC DNA]</scope>
    <source>
        <strain>C7 / ATCC BAA-1331</strain>
    </source>
</reference>
<name>PYRI_METM7</name>
<protein>
    <recommendedName>
        <fullName evidence="1">Aspartate carbamoyltransferase regulatory chain</fullName>
    </recommendedName>
</protein>
<organism>
    <name type="scientific">Methanococcus maripaludis (strain C7 / ATCC BAA-1331)</name>
    <dbReference type="NCBI Taxonomy" id="426368"/>
    <lineage>
        <taxon>Archaea</taxon>
        <taxon>Methanobacteriati</taxon>
        <taxon>Methanobacteriota</taxon>
        <taxon>Methanomada group</taxon>
        <taxon>Methanococci</taxon>
        <taxon>Methanococcales</taxon>
        <taxon>Methanococcaceae</taxon>
        <taxon>Methanococcus</taxon>
    </lineage>
</organism>
<evidence type="ECO:0000255" key="1">
    <source>
        <dbReference type="HAMAP-Rule" id="MF_00002"/>
    </source>
</evidence>
<feature type="chain" id="PRO_1000000039" description="Aspartate carbamoyltransferase regulatory chain">
    <location>
        <begin position="1"/>
        <end position="148"/>
    </location>
</feature>
<feature type="binding site" evidence="1">
    <location>
        <position position="106"/>
    </location>
    <ligand>
        <name>Zn(2+)</name>
        <dbReference type="ChEBI" id="CHEBI:29105"/>
    </ligand>
</feature>
<feature type="binding site" evidence="1">
    <location>
        <position position="111"/>
    </location>
    <ligand>
        <name>Zn(2+)</name>
        <dbReference type="ChEBI" id="CHEBI:29105"/>
    </ligand>
</feature>
<feature type="binding site" evidence="1">
    <location>
        <position position="134"/>
    </location>
    <ligand>
        <name>Zn(2+)</name>
        <dbReference type="ChEBI" id="CHEBI:29105"/>
    </ligand>
</feature>
<feature type="binding site" evidence="1">
    <location>
        <position position="137"/>
    </location>
    <ligand>
        <name>Zn(2+)</name>
        <dbReference type="ChEBI" id="CHEBI:29105"/>
    </ligand>
</feature>
<comment type="function">
    <text evidence="1">Involved in allosteric regulation of aspartate carbamoyltransferase.</text>
</comment>
<comment type="cofactor">
    <cofactor evidence="1">
        <name>Zn(2+)</name>
        <dbReference type="ChEBI" id="CHEBI:29105"/>
    </cofactor>
    <text evidence="1">Binds 1 zinc ion per subunit.</text>
</comment>
<comment type="subunit">
    <text evidence="1">Contains catalytic and regulatory chains.</text>
</comment>
<comment type="similarity">
    <text evidence="1">Belongs to the PyrI family.</text>
</comment>
<proteinExistence type="inferred from homology"/>
<accession>A6VG49</accession>